<proteinExistence type="evidence at protein level"/>
<dbReference type="EMBL" id="D25216">
    <property type="protein sequence ID" value="BAA04946.2"/>
    <property type="status" value="ALT_INIT"/>
    <property type="molecule type" value="mRNA"/>
</dbReference>
<dbReference type="EMBL" id="AK289473">
    <property type="protein sequence ID" value="BAF82162.1"/>
    <property type="molecule type" value="mRNA"/>
</dbReference>
<dbReference type="EMBL" id="CH471162">
    <property type="protein sequence ID" value="EAW82066.1"/>
    <property type="molecule type" value="Genomic_DNA"/>
</dbReference>
<dbReference type="EMBL" id="CH471162">
    <property type="protein sequence ID" value="EAW82067.1"/>
    <property type="molecule type" value="Genomic_DNA"/>
</dbReference>
<dbReference type="EMBL" id="CH471162">
    <property type="protein sequence ID" value="EAW82068.1"/>
    <property type="molecule type" value="Genomic_DNA"/>
</dbReference>
<dbReference type="EMBL" id="CH471162">
    <property type="protein sequence ID" value="EAW82069.1"/>
    <property type="molecule type" value="Genomic_DNA"/>
</dbReference>
<dbReference type="EMBL" id="BC011377">
    <property type="protein sequence ID" value="AAH11377.1"/>
    <property type="molecule type" value="mRNA"/>
</dbReference>
<dbReference type="CCDS" id="CCDS6432.1"/>
<dbReference type="RefSeq" id="NP_001258965.1">
    <property type="nucleotide sequence ID" value="NM_001272036.2"/>
</dbReference>
<dbReference type="RefSeq" id="NP_055480.1">
    <property type="nucleotide sequence ID" value="NM_014665.4"/>
</dbReference>
<dbReference type="RefSeq" id="XP_005272415.1">
    <property type="nucleotide sequence ID" value="XM_005272358.6"/>
</dbReference>
<dbReference type="RefSeq" id="XP_005272416.1">
    <property type="nucleotide sequence ID" value="XM_005272359.6"/>
</dbReference>
<dbReference type="RefSeq" id="XP_024303104.1">
    <property type="nucleotide sequence ID" value="XM_024447336.2"/>
</dbReference>
<dbReference type="RefSeq" id="XP_054217540.1">
    <property type="nucleotide sequence ID" value="XM_054361565.1"/>
</dbReference>
<dbReference type="RefSeq" id="XP_054217541.1">
    <property type="nucleotide sequence ID" value="XM_054361566.1"/>
</dbReference>
<dbReference type="RefSeq" id="XP_054217542.1">
    <property type="nucleotide sequence ID" value="XM_054361567.1"/>
</dbReference>
<dbReference type="SMR" id="Q15048"/>
<dbReference type="BioGRID" id="115037">
    <property type="interactions" value="16"/>
</dbReference>
<dbReference type="FunCoup" id="Q15048">
    <property type="interactions" value="1562"/>
</dbReference>
<dbReference type="IntAct" id="Q15048">
    <property type="interactions" value="6"/>
</dbReference>
<dbReference type="STRING" id="9606.ENSP00000292524"/>
<dbReference type="GlyGen" id="Q15048">
    <property type="glycosylation" value="1 site, 1 O-linked glycan (1 site)"/>
</dbReference>
<dbReference type="iPTMnet" id="Q15048"/>
<dbReference type="PhosphoSitePlus" id="Q15048"/>
<dbReference type="BioMuta" id="LRRC14"/>
<dbReference type="DMDM" id="6686102"/>
<dbReference type="jPOST" id="Q15048"/>
<dbReference type="MassIVE" id="Q15048"/>
<dbReference type="PaxDb" id="9606-ENSP00000292524"/>
<dbReference type="PeptideAtlas" id="Q15048"/>
<dbReference type="ProteomicsDB" id="60400"/>
<dbReference type="Pumba" id="Q15048"/>
<dbReference type="TopDownProteomics" id="Q15048"/>
<dbReference type="Antibodypedia" id="14965">
    <property type="antibodies" value="59 antibodies from 17 providers"/>
</dbReference>
<dbReference type="DNASU" id="9684"/>
<dbReference type="Ensembl" id="ENST00000292524.6">
    <property type="protein sequence ID" value="ENSP00000292524.1"/>
    <property type="gene ID" value="ENSG00000160959.8"/>
</dbReference>
<dbReference type="Ensembl" id="ENST00000529022.5">
    <property type="protein sequence ID" value="ENSP00000434768.1"/>
    <property type="gene ID" value="ENSG00000160959.8"/>
</dbReference>
<dbReference type="GeneID" id="9684"/>
<dbReference type="KEGG" id="hsa:9684"/>
<dbReference type="MANE-Select" id="ENST00000292524.6">
    <property type="protein sequence ID" value="ENSP00000292524.1"/>
    <property type="RefSeq nucleotide sequence ID" value="NM_014665.4"/>
    <property type="RefSeq protein sequence ID" value="NP_055480.1"/>
</dbReference>
<dbReference type="UCSC" id="uc003zdk.4">
    <property type="organism name" value="human"/>
</dbReference>
<dbReference type="AGR" id="HGNC:20419"/>
<dbReference type="CTD" id="9684"/>
<dbReference type="DisGeNET" id="9684"/>
<dbReference type="GeneCards" id="LRRC14"/>
<dbReference type="HGNC" id="HGNC:20419">
    <property type="gene designation" value="LRRC14"/>
</dbReference>
<dbReference type="HPA" id="ENSG00000160959">
    <property type="expression patterns" value="Low tissue specificity"/>
</dbReference>
<dbReference type="MalaCards" id="LRRC14"/>
<dbReference type="MIM" id="619368">
    <property type="type" value="gene"/>
</dbReference>
<dbReference type="neXtProt" id="NX_Q15048"/>
<dbReference type="OpenTargets" id="ENSG00000160959"/>
<dbReference type="PharmGKB" id="PA134914089"/>
<dbReference type="VEuPathDB" id="HostDB:ENSG00000160959"/>
<dbReference type="eggNOG" id="ENOG502QWSJ">
    <property type="taxonomic scope" value="Eukaryota"/>
</dbReference>
<dbReference type="GeneTree" id="ENSGT01030000234531"/>
<dbReference type="HOGENOM" id="CLU_039635_0_1_1"/>
<dbReference type="InParanoid" id="Q15048"/>
<dbReference type="OMA" id="VTECELM"/>
<dbReference type="OrthoDB" id="6479713at2759"/>
<dbReference type="PAN-GO" id="Q15048">
    <property type="GO annotations" value="3 GO annotations based on evolutionary models"/>
</dbReference>
<dbReference type="PhylomeDB" id="Q15048"/>
<dbReference type="TreeFam" id="TF332708"/>
<dbReference type="PathwayCommons" id="Q15048"/>
<dbReference type="Reactome" id="R-HSA-9758274">
    <property type="pathway name" value="Regulation of NF-kappa B signaling"/>
</dbReference>
<dbReference type="SignaLink" id="Q15048"/>
<dbReference type="BioGRID-ORCS" id="9684">
    <property type="hits" value="15 hits in 1157 CRISPR screens"/>
</dbReference>
<dbReference type="ChiTaRS" id="LRRC14">
    <property type="organism name" value="human"/>
</dbReference>
<dbReference type="GenomeRNAi" id="9684"/>
<dbReference type="Pharos" id="Q15048">
    <property type="development level" value="Tdark"/>
</dbReference>
<dbReference type="PRO" id="PR:Q15048"/>
<dbReference type="Proteomes" id="UP000005640">
    <property type="component" value="Chromosome 8"/>
</dbReference>
<dbReference type="RNAct" id="Q15048">
    <property type="molecule type" value="protein"/>
</dbReference>
<dbReference type="Bgee" id="ENSG00000160959">
    <property type="expression patterns" value="Expressed in lower esophagus mucosa and 161 other cell types or tissues"/>
</dbReference>
<dbReference type="ExpressionAtlas" id="Q15048">
    <property type="expression patterns" value="baseline and differential"/>
</dbReference>
<dbReference type="GO" id="GO:0005737">
    <property type="term" value="C:cytoplasm"/>
    <property type="evidence" value="ECO:0000314"/>
    <property type="project" value="UniProtKB"/>
</dbReference>
<dbReference type="GO" id="GO:0005829">
    <property type="term" value="C:cytosol"/>
    <property type="evidence" value="ECO:0000304"/>
    <property type="project" value="Reactome"/>
</dbReference>
<dbReference type="GO" id="GO:0019900">
    <property type="term" value="F:kinase binding"/>
    <property type="evidence" value="ECO:0000353"/>
    <property type="project" value="UniProtKB"/>
</dbReference>
<dbReference type="GO" id="GO:0032088">
    <property type="term" value="P:negative regulation of NF-kappaB transcription factor activity"/>
    <property type="evidence" value="ECO:0000314"/>
    <property type="project" value="UniProtKB"/>
</dbReference>
<dbReference type="GO" id="GO:0034122">
    <property type="term" value="P:negative regulation of toll-like receptor signaling pathway"/>
    <property type="evidence" value="ECO:0000314"/>
    <property type="project" value="UniProtKB"/>
</dbReference>
<dbReference type="FunFam" id="3.80.10.10:FF:000119">
    <property type="entry name" value="Leucine-rich repeat-containing 14 isoform b"/>
    <property type="match status" value="1"/>
</dbReference>
<dbReference type="Gene3D" id="3.80.10.10">
    <property type="entry name" value="Ribonuclease Inhibitor"/>
    <property type="match status" value="1"/>
</dbReference>
<dbReference type="InterPro" id="IPR001611">
    <property type="entry name" value="Leu-rich_rpt"/>
</dbReference>
<dbReference type="InterPro" id="IPR032675">
    <property type="entry name" value="LRR_dom_sf"/>
</dbReference>
<dbReference type="InterPro" id="IPR050694">
    <property type="entry name" value="PRAME_domain"/>
</dbReference>
<dbReference type="PANTHER" id="PTHR14224:SF9">
    <property type="entry name" value="LEUCINE-RICH REPEAT-CONTAINING PROTEIN 14"/>
    <property type="match status" value="1"/>
</dbReference>
<dbReference type="PANTHER" id="PTHR14224">
    <property type="entry name" value="SIMILAR TO PREFERENTIALLY EXPRESSED ANTIGEN IN MELANOMA-LIKE 3"/>
    <property type="match status" value="1"/>
</dbReference>
<dbReference type="Pfam" id="PF13516">
    <property type="entry name" value="LRR_6"/>
    <property type="match status" value="2"/>
</dbReference>
<dbReference type="SUPFAM" id="SSF52047">
    <property type="entry name" value="RNI-like"/>
    <property type="match status" value="1"/>
</dbReference>
<name>LRC14_HUMAN</name>
<reference key="1">
    <citation type="journal article" date="1994" name="DNA Res.">
        <title>Prediction of the coding sequences of unidentified human genes. I. The coding sequences of 40 new genes (KIAA0001-KIAA0040) deduced by analysis of randomly sampled cDNA clones from human immature myeloid cell line KG-1.</title>
        <authorList>
            <person name="Nomura N."/>
            <person name="Miyajima N."/>
            <person name="Sazuka T."/>
            <person name="Tanaka A."/>
            <person name="Kawarabayasi Y."/>
            <person name="Sato S."/>
            <person name="Nagase T."/>
            <person name="Seki N."/>
            <person name="Ishikawa K."/>
            <person name="Tabata S."/>
        </authorList>
    </citation>
    <scope>NUCLEOTIDE SEQUENCE [LARGE SCALE MRNA]</scope>
    <source>
        <tissue>Bone marrow</tissue>
    </source>
</reference>
<reference key="2">
    <citation type="journal article" date="2004" name="Nat. Genet.">
        <title>Complete sequencing and characterization of 21,243 full-length human cDNAs.</title>
        <authorList>
            <person name="Ota T."/>
            <person name="Suzuki Y."/>
            <person name="Nishikawa T."/>
            <person name="Otsuki T."/>
            <person name="Sugiyama T."/>
            <person name="Irie R."/>
            <person name="Wakamatsu A."/>
            <person name="Hayashi K."/>
            <person name="Sato H."/>
            <person name="Nagai K."/>
            <person name="Kimura K."/>
            <person name="Makita H."/>
            <person name="Sekine M."/>
            <person name="Obayashi M."/>
            <person name="Nishi T."/>
            <person name="Shibahara T."/>
            <person name="Tanaka T."/>
            <person name="Ishii S."/>
            <person name="Yamamoto J."/>
            <person name="Saito K."/>
            <person name="Kawai Y."/>
            <person name="Isono Y."/>
            <person name="Nakamura Y."/>
            <person name="Nagahari K."/>
            <person name="Murakami K."/>
            <person name="Yasuda T."/>
            <person name="Iwayanagi T."/>
            <person name="Wagatsuma M."/>
            <person name="Shiratori A."/>
            <person name="Sudo H."/>
            <person name="Hosoiri T."/>
            <person name="Kaku Y."/>
            <person name="Kodaira H."/>
            <person name="Kondo H."/>
            <person name="Sugawara M."/>
            <person name="Takahashi M."/>
            <person name="Kanda K."/>
            <person name="Yokoi T."/>
            <person name="Furuya T."/>
            <person name="Kikkawa E."/>
            <person name="Omura Y."/>
            <person name="Abe K."/>
            <person name="Kamihara K."/>
            <person name="Katsuta N."/>
            <person name="Sato K."/>
            <person name="Tanikawa M."/>
            <person name="Yamazaki M."/>
            <person name="Ninomiya K."/>
            <person name="Ishibashi T."/>
            <person name="Yamashita H."/>
            <person name="Murakawa K."/>
            <person name="Fujimori K."/>
            <person name="Tanai H."/>
            <person name="Kimata M."/>
            <person name="Watanabe M."/>
            <person name="Hiraoka S."/>
            <person name="Chiba Y."/>
            <person name="Ishida S."/>
            <person name="Ono Y."/>
            <person name="Takiguchi S."/>
            <person name="Watanabe S."/>
            <person name="Yosida M."/>
            <person name="Hotuta T."/>
            <person name="Kusano J."/>
            <person name="Kanehori K."/>
            <person name="Takahashi-Fujii A."/>
            <person name="Hara H."/>
            <person name="Tanase T.-O."/>
            <person name="Nomura Y."/>
            <person name="Togiya S."/>
            <person name="Komai F."/>
            <person name="Hara R."/>
            <person name="Takeuchi K."/>
            <person name="Arita M."/>
            <person name="Imose N."/>
            <person name="Musashino K."/>
            <person name="Yuuki H."/>
            <person name="Oshima A."/>
            <person name="Sasaki N."/>
            <person name="Aotsuka S."/>
            <person name="Yoshikawa Y."/>
            <person name="Matsunawa H."/>
            <person name="Ichihara T."/>
            <person name="Shiohata N."/>
            <person name="Sano S."/>
            <person name="Moriya S."/>
            <person name="Momiyama H."/>
            <person name="Satoh N."/>
            <person name="Takami S."/>
            <person name="Terashima Y."/>
            <person name="Suzuki O."/>
            <person name="Nakagawa S."/>
            <person name="Senoh A."/>
            <person name="Mizoguchi H."/>
            <person name="Goto Y."/>
            <person name="Shimizu F."/>
            <person name="Wakebe H."/>
            <person name="Hishigaki H."/>
            <person name="Watanabe T."/>
            <person name="Sugiyama A."/>
            <person name="Takemoto M."/>
            <person name="Kawakami B."/>
            <person name="Yamazaki M."/>
            <person name="Watanabe K."/>
            <person name="Kumagai A."/>
            <person name="Itakura S."/>
            <person name="Fukuzumi Y."/>
            <person name="Fujimori Y."/>
            <person name="Komiyama M."/>
            <person name="Tashiro H."/>
            <person name="Tanigami A."/>
            <person name="Fujiwara T."/>
            <person name="Ono T."/>
            <person name="Yamada K."/>
            <person name="Fujii Y."/>
            <person name="Ozaki K."/>
            <person name="Hirao M."/>
            <person name="Ohmori Y."/>
            <person name="Kawabata A."/>
            <person name="Hikiji T."/>
            <person name="Kobatake N."/>
            <person name="Inagaki H."/>
            <person name="Ikema Y."/>
            <person name="Okamoto S."/>
            <person name="Okitani R."/>
            <person name="Kawakami T."/>
            <person name="Noguchi S."/>
            <person name="Itoh T."/>
            <person name="Shigeta K."/>
            <person name="Senba T."/>
            <person name="Matsumura K."/>
            <person name="Nakajima Y."/>
            <person name="Mizuno T."/>
            <person name="Morinaga M."/>
            <person name="Sasaki M."/>
            <person name="Togashi T."/>
            <person name="Oyama M."/>
            <person name="Hata H."/>
            <person name="Watanabe M."/>
            <person name="Komatsu T."/>
            <person name="Mizushima-Sugano J."/>
            <person name="Satoh T."/>
            <person name="Shirai Y."/>
            <person name="Takahashi Y."/>
            <person name="Nakagawa K."/>
            <person name="Okumura K."/>
            <person name="Nagase T."/>
            <person name="Nomura N."/>
            <person name="Kikuchi H."/>
            <person name="Masuho Y."/>
            <person name="Yamashita R."/>
            <person name="Nakai K."/>
            <person name="Yada T."/>
            <person name="Nakamura Y."/>
            <person name="Ohara O."/>
            <person name="Isogai T."/>
            <person name="Sugano S."/>
        </authorList>
    </citation>
    <scope>NUCLEOTIDE SEQUENCE [LARGE SCALE MRNA]</scope>
    <source>
        <tissue>Cerebellum</tissue>
    </source>
</reference>
<reference key="3">
    <citation type="submission" date="2005-09" db="EMBL/GenBank/DDBJ databases">
        <authorList>
            <person name="Mural R.J."/>
            <person name="Istrail S."/>
            <person name="Sutton G.G."/>
            <person name="Florea L."/>
            <person name="Halpern A.L."/>
            <person name="Mobarry C.M."/>
            <person name="Lippert R."/>
            <person name="Walenz B."/>
            <person name="Shatkay H."/>
            <person name="Dew I."/>
            <person name="Miller J.R."/>
            <person name="Flanigan M.J."/>
            <person name="Edwards N.J."/>
            <person name="Bolanos R."/>
            <person name="Fasulo D."/>
            <person name="Halldorsson B.V."/>
            <person name="Hannenhalli S."/>
            <person name="Turner R."/>
            <person name="Yooseph S."/>
            <person name="Lu F."/>
            <person name="Nusskern D.R."/>
            <person name="Shue B.C."/>
            <person name="Zheng X.H."/>
            <person name="Zhong F."/>
            <person name="Delcher A.L."/>
            <person name="Huson D.H."/>
            <person name="Kravitz S.A."/>
            <person name="Mouchard L."/>
            <person name="Reinert K."/>
            <person name="Remington K.A."/>
            <person name="Clark A.G."/>
            <person name="Waterman M.S."/>
            <person name="Eichler E.E."/>
            <person name="Adams M.D."/>
            <person name="Hunkapiller M.W."/>
            <person name="Myers E.W."/>
            <person name="Venter J.C."/>
        </authorList>
    </citation>
    <scope>NUCLEOTIDE SEQUENCE [LARGE SCALE GENOMIC DNA]</scope>
</reference>
<reference key="4">
    <citation type="journal article" date="2004" name="Genome Res.">
        <title>The status, quality, and expansion of the NIH full-length cDNA project: the Mammalian Gene Collection (MGC).</title>
        <authorList>
            <consortium name="The MGC Project Team"/>
        </authorList>
    </citation>
    <scope>NUCLEOTIDE SEQUENCE [LARGE SCALE MRNA]</scope>
    <source>
        <tissue>Colon</tissue>
    </source>
</reference>
<reference key="5">
    <citation type="journal article" date="2016" name="Exp. Cell Res.">
        <title>LRRC14 attenuates Toll-like receptor-mediated NF-kappa-B signaling through disruption of IKK complex.</title>
        <authorList>
            <person name="Wu C."/>
            <person name="Yang Y."/>
            <person name="Ou J."/>
            <person name="Zhu L."/>
            <person name="Zhao W."/>
            <person name="Cui J."/>
        </authorList>
    </citation>
    <scope>INDUCTION</scope>
    <scope>SUBCELLULAR LOCATION</scope>
    <scope>INTERACTION WITH CHUK AND IKBKB</scope>
    <scope>FUNCTION</scope>
</reference>
<keyword id="KW-0963">Cytoplasm</keyword>
<keyword id="KW-0433">Leucine-rich repeat</keyword>
<keyword id="KW-1267">Proteomics identification</keyword>
<keyword id="KW-1185">Reference proteome</keyword>
<keyword id="KW-0677">Repeat</keyword>
<feature type="chain" id="PRO_0000156974" description="Leucine-rich repeat-containing protein 14">
    <location>
        <begin position="1"/>
        <end position="493"/>
    </location>
</feature>
<feature type="repeat" description="LRR 1; degenerate" evidence="1">
    <location>
        <begin position="111"/>
        <end position="146"/>
    </location>
</feature>
<feature type="repeat" description="LRR 2; degenerate" evidence="1">
    <location>
        <begin position="194"/>
        <end position="218"/>
    </location>
</feature>
<feature type="repeat" description="LRR 3; degenerate" evidence="1">
    <location>
        <begin position="219"/>
        <end position="246"/>
    </location>
</feature>
<feature type="repeat" description="LRR 4; degenerate" evidence="1">
    <location>
        <begin position="247"/>
        <end position="282"/>
    </location>
</feature>
<feature type="repeat" description="LRR 5" evidence="1">
    <location>
        <begin position="283"/>
        <end position="307"/>
    </location>
</feature>
<feature type="repeat" description="LRR 6" evidence="1">
    <location>
        <begin position="308"/>
        <end position="339"/>
    </location>
</feature>
<feature type="repeat" description="LRR 7" evidence="1">
    <location>
        <begin position="340"/>
        <end position="360"/>
    </location>
</feature>
<feature type="repeat" description="LRR 8" evidence="1">
    <location>
        <begin position="364"/>
        <end position="391"/>
    </location>
</feature>
<feature type="repeat" description="LRR 9" evidence="1">
    <location>
        <begin position="392"/>
        <end position="416"/>
    </location>
</feature>
<feature type="sequence variant" id="VAR_053603" description="In dbSNP:rs3735854.">
    <original>G</original>
    <variation>D</variation>
    <location>
        <position position="437"/>
    </location>
</feature>
<feature type="sequence conflict" description="In Ref. 2; BAF82162." evidence="4" ref="2">
    <original>N</original>
    <variation>S</variation>
    <location>
        <position position="230"/>
    </location>
</feature>
<gene>
    <name evidence="5" type="primary">LRRC14</name>
    <name evidence="3" type="synonym">KIAA0014</name>
</gene>
<protein>
    <recommendedName>
        <fullName evidence="4">Leucine-rich repeat-containing protein 14</fullName>
    </recommendedName>
</protein>
<sequence length="493" mass="54513">MHTLVFLSTRQVLQCQPAACQALPLLPRELFPLLFKVAFMDKKTVVLRELVHTWPFPLLSFQQLLQECAHCSRALLQERPSTESMQAVILGLTARLHTSEPGASTQPLCRKHALRVLDMTGLLDDGVEQDPGTMSMWDCTAAVARTCIAQQQGGAAEPGPAPIPVEVRVDLRVNRASYAFLREALRSSVGSPLRLCCRDLRAEDLPMRNTVALLQLLDAGCLRRVDLRFNNLGLRGLSVIIPHVARFQHLASLRLHYVHGDSRQPSVDGEDNFRYFLAQMGRFTCLRELSMGSSLLSGRLDQLLSTLQSPLESLELAFCALLPEDLRFLARSPHAAHLKKLDLSGNDLSGSQLAPFQGLLQASAATLLHLELTECQLADTQLLATLPILTQCASLRYLGLYGNPLSMAGLKELLRDSVAQAELRTVVHPFPVDCYEGLPWPPPASVLLEASINEEKFARVEAELHQLLLASGRAHVLWTTDIYGRLAADYFSL</sequence>
<accession>Q15048</accession>
<accession>A8K0A8</accession>
<accession>D3DWM8</accession>
<comment type="function">
    <text evidence="2">Negatively regulates Toll-like receptor-mediated NF-kappa-B signaling by disrupting IKK core complex formation through interaction with IKBKB.</text>
</comment>
<comment type="subunit">
    <text evidence="2">Interacts with IKBKB; disrupts IKBKB-IKBKG interaction preventing I-kappa-B-kinase (IKK) core complex formation and leading to a decrease of IKBKB phosphorylation and NF-kappaB activation (PubMed:27426725). Interacts with CHUK (PubMed:27426725).</text>
</comment>
<comment type="interaction">
    <interactant intactId="EBI-2510124">
        <id>Q15048</id>
    </interactant>
    <interactant intactId="EBI-456179">
        <id>Q13617</id>
        <label>CUL2</label>
    </interactant>
    <organismsDiffer>false</organismsDiffer>
    <experiments>7</experiments>
</comment>
<comment type="subcellular location">
    <subcellularLocation>
        <location evidence="2">Cytoplasm</location>
    </subcellularLocation>
</comment>
<comment type="induction">
    <text evidence="2">Down-regulated in response to toll-like receptor ligand.</text>
</comment>
<comment type="similarity">
    <text evidence="4">Belongs to the PRAME family. LRRC14 subfamily.</text>
</comment>
<comment type="sequence caution" evidence="4">
    <conflict type="erroneous initiation">
        <sequence resource="EMBL-CDS" id="BAA04946"/>
    </conflict>
</comment>
<evidence type="ECO:0000250" key="1">
    <source>
        <dbReference type="UniProtKB" id="Q3UWY1"/>
    </source>
</evidence>
<evidence type="ECO:0000269" key="2">
    <source>
    </source>
</evidence>
<evidence type="ECO:0000303" key="3">
    <source>
    </source>
</evidence>
<evidence type="ECO:0000305" key="4"/>
<evidence type="ECO:0000312" key="5">
    <source>
        <dbReference type="HGNC" id="HGNC:20419"/>
    </source>
</evidence>
<organism>
    <name type="scientific">Homo sapiens</name>
    <name type="common">Human</name>
    <dbReference type="NCBI Taxonomy" id="9606"/>
    <lineage>
        <taxon>Eukaryota</taxon>
        <taxon>Metazoa</taxon>
        <taxon>Chordata</taxon>
        <taxon>Craniata</taxon>
        <taxon>Vertebrata</taxon>
        <taxon>Euteleostomi</taxon>
        <taxon>Mammalia</taxon>
        <taxon>Eutheria</taxon>
        <taxon>Euarchontoglires</taxon>
        <taxon>Primates</taxon>
        <taxon>Haplorrhini</taxon>
        <taxon>Catarrhini</taxon>
        <taxon>Hominidae</taxon>
        <taxon>Homo</taxon>
    </lineage>
</organism>